<dbReference type="EC" id="7.1.1.9"/>
<dbReference type="EMBL" id="AF030476">
    <property type="protein sequence ID" value="AAB93615.1"/>
    <property type="molecule type" value="Genomic_DNA"/>
</dbReference>
<dbReference type="SMR" id="O47709"/>
<dbReference type="CTD" id="4514"/>
<dbReference type="GO" id="GO:0005743">
    <property type="term" value="C:mitochondrial inner membrane"/>
    <property type="evidence" value="ECO:0007669"/>
    <property type="project" value="UniProtKB-SubCell"/>
</dbReference>
<dbReference type="GO" id="GO:0045277">
    <property type="term" value="C:respiratory chain complex IV"/>
    <property type="evidence" value="ECO:0000250"/>
    <property type="project" value="UniProtKB"/>
</dbReference>
<dbReference type="GO" id="GO:0004129">
    <property type="term" value="F:cytochrome-c oxidase activity"/>
    <property type="evidence" value="ECO:0007669"/>
    <property type="project" value="UniProtKB-EC"/>
</dbReference>
<dbReference type="GO" id="GO:0006123">
    <property type="term" value="P:mitochondrial electron transport, cytochrome c to oxygen"/>
    <property type="evidence" value="ECO:0007669"/>
    <property type="project" value="TreeGrafter"/>
</dbReference>
<dbReference type="GO" id="GO:0008535">
    <property type="term" value="P:respiratory chain complex IV assembly"/>
    <property type="evidence" value="ECO:0000250"/>
    <property type="project" value="UniProtKB"/>
</dbReference>
<dbReference type="CDD" id="cd01665">
    <property type="entry name" value="Cyt_c_Oxidase_III"/>
    <property type="match status" value="1"/>
</dbReference>
<dbReference type="FunFam" id="1.10.287.70:FF:000048">
    <property type="entry name" value="Cytochrome c oxidase subunit 3"/>
    <property type="match status" value="1"/>
</dbReference>
<dbReference type="FunFam" id="1.20.120.80:FF:000002">
    <property type="entry name" value="Cytochrome c oxidase subunit 3"/>
    <property type="match status" value="1"/>
</dbReference>
<dbReference type="Gene3D" id="1.10.287.70">
    <property type="match status" value="1"/>
</dbReference>
<dbReference type="Gene3D" id="1.20.120.80">
    <property type="entry name" value="Cytochrome c oxidase, subunit III, four-helix bundle"/>
    <property type="match status" value="1"/>
</dbReference>
<dbReference type="InterPro" id="IPR024791">
    <property type="entry name" value="Cyt_c/ubiquinol_Oxase_su3"/>
</dbReference>
<dbReference type="InterPro" id="IPR033945">
    <property type="entry name" value="Cyt_c_oxase_su3_dom"/>
</dbReference>
<dbReference type="InterPro" id="IPR000298">
    <property type="entry name" value="Cyt_c_oxidase-like_su3"/>
</dbReference>
<dbReference type="InterPro" id="IPR035973">
    <property type="entry name" value="Cyt_c_oxidase_su3-like_sf"/>
</dbReference>
<dbReference type="InterPro" id="IPR013833">
    <property type="entry name" value="Cyt_c_oxidase_su3_a-hlx"/>
</dbReference>
<dbReference type="PANTHER" id="PTHR11403:SF7">
    <property type="entry name" value="CYTOCHROME C OXIDASE SUBUNIT 3"/>
    <property type="match status" value="1"/>
</dbReference>
<dbReference type="PANTHER" id="PTHR11403">
    <property type="entry name" value="CYTOCHROME C OXIDASE SUBUNIT III"/>
    <property type="match status" value="1"/>
</dbReference>
<dbReference type="Pfam" id="PF00510">
    <property type="entry name" value="COX3"/>
    <property type="match status" value="1"/>
</dbReference>
<dbReference type="SUPFAM" id="SSF81452">
    <property type="entry name" value="Cytochrome c oxidase subunit III-like"/>
    <property type="match status" value="1"/>
</dbReference>
<dbReference type="PROSITE" id="PS50253">
    <property type="entry name" value="COX3"/>
    <property type="match status" value="1"/>
</dbReference>
<gene>
    <name type="primary">MT-CO3</name>
    <name type="synonym">COIII</name>
    <name type="synonym">COXIII</name>
    <name type="synonym">MTCO3</name>
</gene>
<accession>O47709</accession>
<comment type="function">
    <text evidence="2">Component of the cytochrome c oxidase, the last enzyme in the mitochondrial electron transport chain which drives oxidative phosphorylation. The respiratory chain contains 3 multisubunit complexes succinate dehydrogenase (complex II, CII), ubiquinol-cytochrome c oxidoreductase (cytochrome b-c1 complex, complex III, CIII) and cytochrome c oxidase (complex IV, CIV), that cooperate to transfer electrons derived from NADH and succinate to molecular oxygen, creating an electrochemical gradient over the inner membrane that drives transmembrane transport and the ATP synthase. Cytochrome c oxidase is the component of the respiratory chain that catalyzes the reduction of oxygen to water. Electrons originating from reduced cytochrome c in the intermembrane space (IMS) are transferred via the dinuclear copper A center (CU(A)) of subunit 2 and heme A of subunit 1 to the active site in subunit 1, a binuclear center (BNC) formed by heme A3 and copper B (CU(B)). The BNC reduces molecular oxygen to 2 water molecules using 4 electrons from cytochrome c in the IMS and 4 protons from the mitochondrial matrix.</text>
</comment>
<comment type="catalytic activity">
    <reaction evidence="2">
        <text>4 Fe(II)-[cytochrome c] + O2 + 8 H(+)(in) = 4 Fe(III)-[cytochrome c] + 2 H2O + 4 H(+)(out)</text>
        <dbReference type="Rhea" id="RHEA:11436"/>
        <dbReference type="Rhea" id="RHEA-COMP:10350"/>
        <dbReference type="Rhea" id="RHEA-COMP:14399"/>
        <dbReference type="ChEBI" id="CHEBI:15377"/>
        <dbReference type="ChEBI" id="CHEBI:15378"/>
        <dbReference type="ChEBI" id="CHEBI:15379"/>
        <dbReference type="ChEBI" id="CHEBI:29033"/>
        <dbReference type="ChEBI" id="CHEBI:29034"/>
        <dbReference type="EC" id="7.1.1.9"/>
    </reaction>
    <physiologicalReaction direction="left-to-right" evidence="2">
        <dbReference type="Rhea" id="RHEA:11437"/>
    </physiologicalReaction>
</comment>
<comment type="subunit">
    <text evidence="1">Component of the cytochrome c oxidase (complex IV, CIV), a multisubunit enzyme composed of 14 subunits. The complex is composed of a catalytic core of 3 subunits MT-CO1, MT-CO2 and MT-CO3, encoded in the mitochondrial DNA, and 11 supernumerary subunits COX4I, COX5A, COX5B, COX6A, COX6B, COX6C, COX7A, COX7B, COX7C, COX8 and NDUFA4, which are encoded in the nuclear genome. The complex exists as a monomer or a dimer and forms supercomplexes (SCs) in the inner mitochondrial membrane with NADH-ubiquinone oxidoreductase (complex I, CI) and ubiquinol-cytochrome c oxidoreductase (cytochrome b-c1 complex, complex III, CIII), resulting in different assemblies (supercomplex SCI(1)III(2)IV(1) and megacomplex MCI(2)III(2)IV(2)).</text>
</comment>
<comment type="subcellular location">
    <subcellularLocation>
        <location evidence="1">Mitochondrion inner membrane</location>
        <topology evidence="1">Multi-pass membrane protein</topology>
    </subcellularLocation>
</comment>
<comment type="similarity">
    <text evidence="3">Belongs to the cytochrome c oxidase subunit 3 family.</text>
</comment>
<feature type="chain" id="PRO_0000183781" description="Cytochrome c oxidase subunit 3">
    <location>
        <begin position="1"/>
        <end position="261"/>
    </location>
</feature>
<feature type="topological domain" description="Mitochondrial matrix" evidence="1">
    <location>
        <begin position="1"/>
        <end position="15"/>
    </location>
</feature>
<feature type="transmembrane region" description="Helical; Name=I" evidence="1">
    <location>
        <begin position="16"/>
        <end position="34"/>
    </location>
</feature>
<feature type="topological domain" description="Mitochondrial intermembrane" evidence="1">
    <location>
        <begin position="35"/>
        <end position="40"/>
    </location>
</feature>
<feature type="transmembrane region" description="Helical; Name=II" evidence="1">
    <location>
        <begin position="41"/>
        <end position="66"/>
    </location>
</feature>
<feature type="topological domain" description="Mitochondrial matrix" evidence="1">
    <location>
        <begin position="67"/>
        <end position="72"/>
    </location>
</feature>
<feature type="transmembrane region" description="Helical; Name=III" evidence="1">
    <location>
        <begin position="73"/>
        <end position="105"/>
    </location>
</feature>
<feature type="topological domain" description="Mitochondrial intermembrane" evidence="1">
    <location>
        <begin position="106"/>
        <end position="128"/>
    </location>
</feature>
<feature type="transmembrane region" description="Helical; Name=IV" evidence="1">
    <location>
        <begin position="129"/>
        <end position="152"/>
    </location>
</feature>
<feature type="topological domain" description="Mitochondrial matrix" evidence="1">
    <location>
        <begin position="153"/>
        <end position="155"/>
    </location>
</feature>
<feature type="transmembrane region" description="Helical; Name=V" evidence="1">
    <location>
        <begin position="156"/>
        <end position="183"/>
    </location>
</feature>
<feature type="topological domain" description="Mitochondrial intermembrane" evidence="1">
    <location>
        <begin position="184"/>
        <end position="190"/>
    </location>
</feature>
<feature type="transmembrane region" description="Helical; Name=VI" evidence="1">
    <location>
        <begin position="191"/>
        <end position="223"/>
    </location>
</feature>
<feature type="topological domain" description="Mitochondrial matrix" evidence="1">
    <location>
        <begin position="224"/>
        <end position="232"/>
    </location>
</feature>
<feature type="transmembrane region" description="Helical; Name=VII" evidence="1">
    <location>
        <begin position="233"/>
        <end position="256"/>
    </location>
</feature>
<feature type="topological domain" description="Mitochondrial intermembrane" evidence="1">
    <location>
        <begin position="257"/>
        <end position="261"/>
    </location>
</feature>
<keyword id="KW-0472">Membrane</keyword>
<keyword id="KW-0496">Mitochondrion</keyword>
<keyword id="KW-0999">Mitochondrion inner membrane</keyword>
<keyword id="KW-1278">Translocase</keyword>
<keyword id="KW-0812">Transmembrane</keyword>
<keyword id="KW-1133">Transmembrane helix</keyword>
<proteinExistence type="inferred from homology"/>
<sequence>MTHQTHAYHMVNPSPWPLTGALSALLMTSGLIMWFHFNSTTLLMLGLTTNMLTMYQWWRDVVRESTFQGHHTPNVQKGLRYGMILFIISEVLFFTGFFWAFYHSSLAPTPELGGCWPPTGINPLNPLEVPLLNTSVLLASGVSITWAHHSLMEGNRNHMLQALFITIALGVYFTLLQASEYYEAPFTISDGVYGSTFFVATGFHGLHVIIGSTFLIVCFFRQLKFHFTSNHHFGFEAAAWYWHFVDVVWLFLYVSIYWWGS</sequence>
<geneLocation type="mitochondrion"/>
<protein>
    <recommendedName>
        <fullName>Cytochrome c oxidase subunit 3</fullName>
        <ecNumber>7.1.1.9</ecNumber>
    </recommendedName>
    <alternativeName>
        <fullName>Cytochrome c oxidase polypeptide III</fullName>
    </alternativeName>
</protein>
<name>COX3_GAZLE</name>
<organism>
    <name type="scientific">Gazella leptoceros</name>
    <name type="common">Sand gazelle</name>
    <dbReference type="NCBI Taxonomy" id="69303"/>
    <lineage>
        <taxon>Eukaryota</taxon>
        <taxon>Metazoa</taxon>
        <taxon>Chordata</taxon>
        <taxon>Craniata</taxon>
        <taxon>Vertebrata</taxon>
        <taxon>Euteleostomi</taxon>
        <taxon>Mammalia</taxon>
        <taxon>Eutheria</taxon>
        <taxon>Laurasiatheria</taxon>
        <taxon>Artiodactyla</taxon>
        <taxon>Ruminantia</taxon>
        <taxon>Pecora</taxon>
        <taxon>Bovidae</taxon>
        <taxon>Antilopinae</taxon>
        <taxon>Gazella</taxon>
    </lineage>
</organism>
<evidence type="ECO:0000250" key="1">
    <source>
        <dbReference type="UniProtKB" id="P00415"/>
    </source>
</evidence>
<evidence type="ECO:0000250" key="2">
    <source>
        <dbReference type="UniProtKB" id="P00420"/>
    </source>
</evidence>
<evidence type="ECO:0000305" key="3"/>
<reference key="1">
    <citation type="journal article" date="1999" name="Mol. Phylogenet. Evol.">
        <title>Phylogenetic relationships in the bovid subfamily Antilopinae based on mitochondrial DNA sequences.</title>
        <authorList>
            <person name="Rebholz W.E.R."/>
            <person name="Harley E.H."/>
        </authorList>
    </citation>
    <scope>NUCLEOTIDE SEQUENCE [GENOMIC DNA]</scope>
</reference>